<comment type="function">
    <text evidence="1">Catalyzes the synthesis of the hydroxymethylpyrimidine phosphate (HMP-P) moiety of thiamine from aminoimidazole ribotide (AIR) in a radical S-adenosyl-L-methionine (SAM)-dependent reaction.</text>
</comment>
<comment type="catalytic activity">
    <reaction evidence="1">
        <text>5-amino-1-(5-phospho-beta-D-ribosyl)imidazole + S-adenosyl-L-methionine = 4-amino-2-methyl-5-(phosphooxymethyl)pyrimidine + CO + 5'-deoxyadenosine + formate + L-methionine + 3 H(+)</text>
        <dbReference type="Rhea" id="RHEA:24840"/>
        <dbReference type="ChEBI" id="CHEBI:15378"/>
        <dbReference type="ChEBI" id="CHEBI:15740"/>
        <dbReference type="ChEBI" id="CHEBI:17245"/>
        <dbReference type="ChEBI" id="CHEBI:17319"/>
        <dbReference type="ChEBI" id="CHEBI:57844"/>
        <dbReference type="ChEBI" id="CHEBI:58354"/>
        <dbReference type="ChEBI" id="CHEBI:59789"/>
        <dbReference type="ChEBI" id="CHEBI:137981"/>
        <dbReference type="EC" id="4.1.99.17"/>
    </reaction>
</comment>
<comment type="cofactor">
    <cofactor evidence="1">
        <name>[4Fe-4S] cluster</name>
        <dbReference type="ChEBI" id="CHEBI:49883"/>
    </cofactor>
    <text evidence="1">Binds 1 [4Fe-4S] cluster per subunit. The cluster is coordinated with 3 cysteines and an exchangeable S-adenosyl-L-methionine.</text>
</comment>
<comment type="pathway">
    <text evidence="1">Cofactor biosynthesis; thiamine diphosphate biosynthesis.</text>
</comment>
<comment type="subunit">
    <text evidence="1">Homodimer.</text>
</comment>
<comment type="similarity">
    <text evidence="1">Belongs to the ThiC family.</text>
</comment>
<name>THIC_SHEWM</name>
<evidence type="ECO:0000255" key="1">
    <source>
        <dbReference type="HAMAP-Rule" id="MF_00089"/>
    </source>
</evidence>
<sequence>MSNRRQTRAQAQQFIDTLTPLQHPNSEKVYLTGSREDLRVGMRQILQSDTLVGGTEADPILESNPPLKVYDCAGPYSDPDAEINVRAGLNKFRQSWIEERADTEQLAGVSSGFTQQRLADDGLDHLRFDSLLPPRRAQSGKRVTQLHYARNGIITPEMEYIAIRENMEQAGITDPVLRQKAKGESFGASIEQVITPEFVRQEVARGRAIIPLNINHPEAEPMIIGRNFLVKVNANIGNSAVTSSIEEEVEKLVWSTRWGADTVMDLSTGRYIHETREWIIRNSPVPIGTVPIYQALEKVNGVAEDLSWEVFRDTLVEQAEQGVDYFTIHAGVLLRYVPMTAKRVTGIVSRGGSIMAKWCLSHHSENFLYEHFTEICELCAAYDVSLSLGDGMRPGSIADANDEAQFSELETLGELVKIAWEYDVQTIIEGPGHIPMNLIKENMDKQLALCDEAPFYTLGPQTTDIAPGYDHFTSGIGAAMIAWYGCAMLCYVTPKEHLGLPNKEDVKQGLIAYKIAAHAGDVAKGHPTAQIRDNALSKARFEFRWEDQYNLGLDPETARAYHDESLPQESAKVAHFCSMCGPKFCSMKISQEVRDYAASQEVELQSHASYQAKSASEIETGMAQMSAEFKAKGAELYHETAVVDEELADAEA</sequence>
<protein>
    <recommendedName>
        <fullName evidence="1">Phosphomethylpyrimidine synthase</fullName>
        <ecNumber evidence="1">4.1.99.17</ecNumber>
    </recommendedName>
    <alternativeName>
        <fullName evidence="1">Hydroxymethylpyrimidine phosphate synthase</fullName>
        <shortName evidence="1">HMP-P synthase</shortName>
        <shortName evidence="1">HMP-phosphate synthase</shortName>
        <shortName evidence="1">HMPP synthase</shortName>
    </alternativeName>
    <alternativeName>
        <fullName evidence="1">Thiamine biosynthesis protein ThiC</fullName>
    </alternativeName>
</protein>
<keyword id="KW-0004">4Fe-4S</keyword>
<keyword id="KW-0408">Iron</keyword>
<keyword id="KW-0411">Iron-sulfur</keyword>
<keyword id="KW-0456">Lyase</keyword>
<keyword id="KW-0479">Metal-binding</keyword>
<keyword id="KW-1185">Reference proteome</keyword>
<keyword id="KW-0949">S-adenosyl-L-methionine</keyword>
<keyword id="KW-0784">Thiamine biosynthesis</keyword>
<keyword id="KW-0862">Zinc</keyword>
<feature type="chain" id="PRO_1000093235" description="Phosphomethylpyrimidine synthase">
    <location>
        <begin position="1"/>
        <end position="652"/>
    </location>
</feature>
<feature type="binding site" evidence="1">
    <location>
        <position position="235"/>
    </location>
    <ligand>
        <name>substrate</name>
    </ligand>
</feature>
<feature type="binding site" evidence="1">
    <location>
        <position position="264"/>
    </location>
    <ligand>
        <name>substrate</name>
    </ligand>
</feature>
<feature type="binding site" evidence="1">
    <location>
        <position position="293"/>
    </location>
    <ligand>
        <name>substrate</name>
    </ligand>
</feature>
<feature type="binding site" evidence="1">
    <location>
        <position position="329"/>
    </location>
    <ligand>
        <name>substrate</name>
    </ligand>
</feature>
<feature type="binding site" evidence="1">
    <location>
        <begin position="349"/>
        <end position="351"/>
    </location>
    <ligand>
        <name>substrate</name>
    </ligand>
</feature>
<feature type="binding site" evidence="1">
    <location>
        <begin position="390"/>
        <end position="393"/>
    </location>
    <ligand>
        <name>substrate</name>
    </ligand>
</feature>
<feature type="binding site" evidence="1">
    <location>
        <position position="429"/>
    </location>
    <ligand>
        <name>substrate</name>
    </ligand>
</feature>
<feature type="binding site" evidence="1">
    <location>
        <position position="433"/>
    </location>
    <ligand>
        <name>Zn(2+)</name>
        <dbReference type="ChEBI" id="CHEBI:29105"/>
    </ligand>
</feature>
<feature type="binding site" evidence="1">
    <location>
        <position position="456"/>
    </location>
    <ligand>
        <name>substrate</name>
    </ligand>
</feature>
<feature type="binding site" evidence="1">
    <location>
        <position position="497"/>
    </location>
    <ligand>
        <name>Zn(2+)</name>
        <dbReference type="ChEBI" id="CHEBI:29105"/>
    </ligand>
</feature>
<feature type="binding site" evidence="1">
    <location>
        <position position="577"/>
    </location>
    <ligand>
        <name>[4Fe-4S] cluster</name>
        <dbReference type="ChEBI" id="CHEBI:49883"/>
        <note>4Fe-4S-S-AdoMet</note>
    </ligand>
</feature>
<feature type="binding site" evidence="1">
    <location>
        <position position="580"/>
    </location>
    <ligand>
        <name>[4Fe-4S] cluster</name>
        <dbReference type="ChEBI" id="CHEBI:49883"/>
        <note>4Fe-4S-S-AdoMet</note>
    </ligand>
</feature>
<feature type="binding site" evidence="1">
    <location>
        <position position="585"/>
    </location>
    <ligand>
        <name>[4Fe-4S] cluster</name>
        <dbReference type="ChEBI" id="CHEBI:49883"/>
        <note>4Fe-4S-S-AdoMet</note>
    </ligand>
</feature>
<dbReference type="EC" id="4.1.99.17" evidence="1"/>
<dbReference type="EMBL" id="CP000961">
    <property type="protein sequence ID" value="ACA86869.1"/>
    <property type="molecule type" value="Genomic_DNA"/>
</dbReference>
<dbReference type="RefSeq" id="WP_012325209.1">
    <property type="nucleotide sequence ID" value="NC_010506.1"/>
</dbReference>
<dbReference type="SMR" id="B1KHI4"/>
<dbReference type="STRING" id="392500.Swoo_2592"/>
<dbReference type="KEGG" id="swd:Swoo_2592"/>
<dbReference type="eggNOG" id="COG0422">
    <property type="taxonomic scope" value="Bacteria"/>
</dbReference>
<dbReference type="HOGENOM" id="CLU_013181_2_1_6"/>
<dbReference type="UniPathway" id="UPA00060"/>
<dbReference type="Proteomes" id="UP000002168">
    <property type="component" value="Chromosome"/>
</dbReference>
<dbReference type="GO" id="GO:0005829">
    <property type="term" value="C:cytosol"/>
    <property type="evidence" value="ECO:0007669"/>
    <property type="project" value="TreeGrafter"/>
</dbReference>
<dbReference type="GO" id="GO:0051539">
    <property type="term" value="F:4 iron, 4 sulfur cluster binding"/>
    <property type="evidence" value="ECO:0007669"/>
    <property type="project" value="UniProtKB-KW"/>
</dbReference>
<dbReference type="GO" id="GO:0016830">
    <property type="term" value="F:carbon-carbon lyase activity"/>
    <property type="evidence" value="ECO:0007669"/>
    <property type="project" value="InterPro"/>
</dbReference>
<dbReference type="GO" id="GO:0008270">
    <property type="term" value="F:zinc ion binding"/>
    <property type="evidence" value="ECO:0007669"/>
    <property type="project" value="UniProtKB-UniRule"/>
</dbReference>
<dbReference type="GO" id="GO:0009228">
    <property type="term" value="P:thiamine biosynthetic process"/>
    <property type="evidence" value="ECO:0007669"/>
    <property type="project" value="UniProtKB-KW"/>
</dbReference>
<dbReference type="GO" id="GO:0009229">
    <property type="term" value="P:thiamine diphosphate biosynthetic process"/>
    <property type="evidence" value="ECO:0007669"/>
    <property type="project" value="UniProtKB-UniRule"/>
</dbReference>
<dbReference type="FunFam" id="3.20.20.540:FF:000001">
    <property type="entry name" value="Phosphomethylpyrimidine synthase"/>
    <property type="match status" value="1"/>
</dbReference>
<dbReference type="Gene3D" id="6.10.250.620">
    <property type="match status" value="1"/>
</dbReference>
<dbReference type="Gene3D" id="3.20.20.540">
    <property type="entry name" value="Radical SAM ThiC family, central domain"/>
    <property type="match status" value="1"/>
</dbReference>
<dbReference type="HAMAP" id="MF_00089">
    <property type="entry name" value="ThiC"/>
    <property type="match status" value="1"/>
</dbReference>
<dbReference type="InterPro" id="IPR037509">
    <property type="entry name" value="ThiC"/>
</dbReference>
<dbReference type="InterPro" id="IPR025747">
    <property type="entry name" value="ThiC-associated_dom"/>
</dbReference>
<dbReference type="InterPro" id="IPR038521">
    <property type="entry name" value="ThiC/Bza_core_dom"/>
</dbReference>
<dbReference type="InterPro" id="IPR002817">
    <property type="entry name" value="ThiC/BzaA/B"/>
</dbReference>
<dbReference type="NCBIfam" id="NF006763">
    <property type="entry name" value="PRK09284.1"/>
    <property type="match status" value="1"/>
</dbReference>
<dbReference type="NCBIfam" id="NF009895">
    <property type="entry name" value="PRK13352.1"/>
    <property type="match status" value="1"/>
</dbReference>
<dbReference type="NCBIfam" id="TIGR00190">
    <property type="entry name" value="thiC"/>
    <property type="match status" value="1"/>
</dbReference>
<dbReference type="PANTHER" id="PTHR30557:SF1">
    <property type="entry name" value="PHOSPHOMETHYLPYRIMIDINE SYNTHASE, CHLOROPLASTIC"/>
    <property type="match status" value="1"/>
</dbReference>
<dbReference type="PANTHER" id="PTHR30557">
    <property type="entry name" value="THIAMINE BIOSYNTHESIS PROTEIN THIC"/>
    <property type="match status" value="1"/>
</dbReference>
<dbReference type="Pfam" id="PF13667">
    <property type="entry name" value="ThiC-associated"/>
    <property type="match status" value="1"/>
</dbReference>
<dbReference type="Pfam" id="PF01964">
    <property type="entry name" value="ThiC_Rad_SAM"/>
    <property type="match status" value="1"/>
</dbReference>
<dbReference type="SFLD" id="SFLDF00407">
    <property type="entry name" value="phosphomethylpyrimidine_syntha"/>
    <property type="match status" value="1"/>
</dbReference>
<dbReference type="SFLD" id="SFLDG01114">
    <property type="entry name" value="phosphomethylpyrimidine_syntha"/>
    <property type="match status" value="1"/>
</dbReference>
<dbReference type="SFLD" id="SFLDS00113">
    <property type="entry name" value="Radical_SAM_Phosphomethylpyrim"/>
    <property type="match status" value="1"/>
</dbReference>
<reference key="1">
    <citation type="submission" date="2008-02" db="EMBL/GenBank/DDBJ databases">
        <title>Complete sequence of Shewanella woodyi ATCC 51908.</title>
        <authorList>
            <consortium name="US DOE Joint Genome Institute"/>
            <person name="Copeland A."/>
            <person name="Lucas S."/>
            <person name="Lapidus A."/>
            <person name="Glavina del Rio T."/>
            <person name="Dalin E."/>
            <person name="Tice H."/>
            <person name="Bruce D."/>
            <person name="Goodwin L."/>
            <person name="Pitluck S."/>
            <person name="Sims D."/>
            <person name="Brettin T."/>
            <person name="Detter J.C."/>
            <person name="Han C."/>
            <person name="Kuske C.R."/>
            <person name="Schmutz J."/>
            <person name="Larimer F."/>
            <person name="Land M."/>
            <person name="Hauser L."/>
            <person name="Kyrpides N."/>
            <person name="Lykidis A."/>
            <person name="Zhao J.-S."/>
            <person name="Richardson P."/>
        </authorList>
    </citation>
    <scope>NUCLEOTIDE SEQUENCE [LARGE SCALE GENOMIC DNA]</scope>
    <source>
        <strain>ATCC 51908 / MS32</strain>
    </source>
</reference>
<accession>B1KHI4</accession>
<gene>
    <name evidence="1" type="primary">thiC</name>
    <name type="ordered locus">Swoo_2592</name>
</gene>
<proteinExistence type="inferred from homology"/>
<organism>
    <name type="scientific">Shewanella woodyi (strain ATCC 51908 / MS32)</name>
    <dbReference type="NCBI Taxonomy" id="392500"/>
    <lineage>
        <taxon>Bacteria</taxon>
        <taxon>Pseudomonadati</taxon>
        <taxon>Pseudomonadota</taxon>
        <taxon>Gammaproteobacteria</taxon>
        <taxon>Alteromonadales</taxon>
        <taxon>Shewanellaceae</taxon>
        <taxon>Shewanella</taxon>
    </lineage>
</organism>